<sequence length="67" mass="7718">MLAMKSFSQVSKSYKASAPSKKLTTLFYVAYITLGLTTPFLLPARMASKDTHYYKDEFCSQRSYTRF</sequence>
<dbReference type="EMBL" id="Z36070">
    <property type="status" value="NOT_ANNOTATED_CDS"/>
    <property type="molecule type" value="Genomic_DNA"/>
</dbReference>
<dbReference type="EMBL" id="BK006936">
    <property type="protein sequence ID" value="DAA07319.1"/>
    <property type="molecule type" value="Genomic_DNA"/>
</dbReference>
<dbReference type="BioGRID" id="531938">
    <property type="interactions" value="2"/>
</dbReference>
<dbReference type="STRING" id="4932.YBR201C-A"/>
<dbReference type="PaxDb" id="4932-YBR201C-A"/>
<dbReference type="PeptideAtlas" id="Q2V2Q3"/>
<dbReference type="EnsemblFungi" id="YBR201C-A_mRNA">
    <property type="protein sequence ID" value="YBR201C-A"/>
    <property type="gene ID" value="YBR201C-A"/>
</dbReference>
<dbReference type="KEGG" id="sce:YBR201C-A"/>
<dbReference type="AGR" id="SGD:S000087085"/>
<dbReference type="SGD" id="S000087085">
    <property type="gene designation" value="YBR201C-A"/>
</dbReference>
<dbReference type="VEuPathDB" id="FungiDB:YBR201C-A"/>
<dbReference type="HOGENOM" id="CLU_2813858_0_0_1"/>
<dbReference type="InParanoid" id="Q2V2Q3"/>
<dbReference type="OrthoDB" id="4056826at2759"/>
<dbReference type="BioCyc" id="YEAST:G3O-29273-MONOMER"/>
<dbReference type="BioGRID-ORCS" id="3799967">
    <property type="hits" value="1 hit in 10 CRISPR screens"/>
</dbReference>
<dbReference type="PRO" id="PR:Q2V2Q3"/>
<dbReference type="Proteomes" id="UP000002311">
    <property type="component" value="Chromosome II"/>
</dbReference>
<dbReference type="RNAct" id="Q2V2Q3">
    <property type="molecule type" value="protein"/>
</dbReference>
<protein>
    <recommendedName>
        <fullName>Putative uncharacterized protein YBR201C-A</fullName>
    </recommendedName>
</protein>
<reference key="1">
    <citation type="journal article" date="1994" name="EMBO J.">
        <title>Complete DNA sequence of yeast chromosome II.</title>
        <authorList>
            <person name="Feldmann H."/>
            <person name="Aigle M."/>
            <person name="Aljinovic G."/>
            <person name="Andre B."/>
            <person name="Baclet M.C."/>
            <person name="Barthe C."/>
            <person name="Baur A."/>
            <person name="Becam A.-M."/>
            <person name="Biteau N."/>
            <person name="Boles E."/>
            <person name="Brandt T."/>
            <person name="Brendel M."/>
            <person name="Brueckner M."/>
            <person name="Bussereau F."/>
            <person name="Christiansen C."/>
            <person name="Contreras R."/>
            <person name="Crouzet M."/>
            <person name="Cziepluch C."/>
            <person name="Demolis N."/>
            <person name="Delaveau T."/>
            <person name="Doignon F."/>
            <person name="Domdey H."/>
            <person name="Duesterhus S."/>
            <person name="Dubois E."/>
            <person name="Dujon B."/>
            <person name="El Bakkoury M."/>
            <person name="Entian K.-D."/>
            <person name="Feuermann M."/>
            <person name="Fiers W."/>
            <person name="Fobo G.M."/>
            <person name="Fritz C."/>
            <person name="Gassenhuber J."/>
            <person name="Glansdorff N."/>
            <person name="Goffeau A."/>
            <person name="Grivell L.A."/>
            <person name="de Haan M."/>
            <person name="Hein C."/>
            <person name="Herbert C.J."/>
            <person name="Hollenberg C.P."/>
            <person name="Holmstroem K."/>
            <person name="Jacq C."/>
            <person name="Jacquet M."/>
            <person name="Jauniaux J.-C."/>
            <person name="Jonniaux J.-L."/>
            <person name="Kallesoee T."/>
            <person name="Kiesau P."/>
            <person name="Kirchrath L."/>
            <person name="Koetter P."/>
            <person name="Korol S."/>
            <person name="Liebl S."/>
            <person name="Logghe M."/>
            <person name="Lohan A.J.E."/>
            <person name="Louis E.J."/>
            <person name="Li Z.Y."/>
            <person name="Maat M.J."/>
            <person name="Mallet L."/>
            <person name="Mannhaupt G."/>
            <person name="Messenguy F."/>
            <person name="Miosga T."/>
            <person name="Molemans F."/>
            <person name="Mueller S."/>
            <person name="Nasr F."/>
            <person name="Obermaier B."/>
            <person name="Perea J."/>
            <person name="Pierard A."/>
            <person name="Piravandi E."/>
            <person name="Pohl F.M."/>
            <person name="Pohl T.M."/>
            <person name="Potier S."/>
            <person name="Proft M."/>
            <person name="Purnelle B."/>
            <person name="Ramezani Rad M."/>
            <person name="Rieger M."/>
            <person name="Rose M."/>
            <person name="Schaaff-Gerstenschlaeger I."/>
            <person name="Scherens B."/>
            <person name="Schwarzlose C."/>
            <person name="Skala J."/>
            <person name="Slonimski P.P."/>
            <person name="Smits P.H.M."/>
            <person name="Souciet J.-L."/>
            <person name="Steensma H.Y."/>
            <person name="Stucka R."/>
            <person name="Urrestarazu L.A."/>
            <person name="van der Aart Q.J.M."/>
            <person name="Van Dyck L."/>
            <person name="Vassarotti A."/>
            <person name="Vetter I."/>
            <person name="Vierendeels F."/>
            <person name="Vissers S."/>
            <person name="Wagner G."/>
            <person name="de Wergifosse P."/>
            <person name="Wolfe K.H."/>
            <person name="Zagulski M."/>
            <person name="Zimmermann F.K."/>
            <person name="Mewes H.-W."/>
            <person name="Kleine K."/>
        </authorList>
    </citation>
    <scope>NUCLEOTIDE SEQUENCE [LARGE SCALE GENOMIC DNA]</scope>
    <source>
        <strain>ATCC 204508 / S288c</strain>
    </source>
</reference>
<reference key="2">
    <citation type="journal article" date="2014" name="G3 (Bethesda)">
        <title>The reference genome sequence of Saccharomyces cerevisiae: Then and now.</title>
        <authorList>
            <person name="Engel S.R."/>
            <person name="Dietrich F.S."/>
            <person name="Fisk D.G."/>
            <person name="Binkley G."/>
            <person name="Balakrishnan R."/>
            <person name="Costanzo M.C."/>
            <person name="Dwight S.S."/>
            <person name="Hitz B.C."/>
            <person name="Karra K."/>
            <person name="Nash R.S."/>
            <person name="Weng S."/>
            <person name="Wong E.D."/>
            <person name="Lloyd P."/>
            <person name="Skrzypek M.S."/>
            <person name="Miyasato S.R."/>
            <person name="Simison M."/>
            <person name="Cherry J.M."/>
        </authorList>
    </citation>
    <scope>GENOME REANNOTATION</scope>
    <source>
        <strain>ATCC 204508 / S288c</strain>
    </source>
</reference>
<proteinExistence type="predicted"/>
<accession>Q2V2Q3</accession>
<accession>D6VQJ9</accession>
<name>YB201_YEAST</name>
<organism>
    <name type="scientific">Saccharomyces cerevisiae (strain ATCC 204508 / S288c)</name>
    <name type="common">Baker's yeast</name>
    <dbReference type="NCBI Taxonomy" id="559292"/>
    <lineage>
        <taxon>Eukaryota</taxon>
        <taxon>Fungi</taxon>
        <taxon>Dikarya</taxon>
        <taxon>Ascomycota</taxon>
        <taxon>Saccharomycotina</taxon>
        <taxon>Saccharomycetes</taxon>
        <taxon>Saccharomycetales</taxon>
        <taxon>Saccharomycetaceae</taxon>
        <taxon>Saccharomyces</taxon>
    </lineage>
</organism>
<gene>
    <name type="ordered locus">YBR201C-A</name>
</gene>
<feature type="chain" id="PRO_0000248441" description="Putative uncharacterized protein YBR201C-A">
    <location>
        <begin position="1"/>
        <end position="67"/>
    </location>
</feature>
<keyword id="KW-1185">Reference proteome</keyword>